<sequence>MSSFTHFNDQGRAKMVDISDKKATVRTAIARSSIVVTKEIYDKISHNEIGKGDVLAVAQIAGIMAAKRTSDIIPMCHPLLLKGVDVSFDWKQSDEQYRLLIEVKVKTEGSTGVEMEALTAASATALTVYDMCKAVDKGMIIGETYLLEKTGGKSGDYTRKS</sequence>
<protein>
    <recommendedName>
        <fullName evidence="1">Cyclic pyranopterin monophosphate synthase</fullName>
        <ecNumber evidence="1">4.6.1.17</ecNumber>
    </recommendedName>
    <alternativeName>
        <fullName evidence="1">Molybdenum cofactor biosynthesis protein C</fullName>
    </alternativeName>
</protein>
<proteinExistence type="inferred from homology"/>
<reference key="1">
    <citation type="journal article" date="2006" name="J. Bacteriol.">
        <title>Pathogenomic sequence analysis of Bacillus cereus and Bacillus thuringiensis isolates closely related to Bacillus anthracis.</title>
        <authorList>
            <person name="Han C.S."/>
            <person name="Xie G."/>
            <person name="Challacombe J.F."/>
            <person name="Altherr M.R."/>
            <person name="Bhotika S.S."/>
            <person name="Bruce D."/>
            <person name="Campbell C.S."/>
            <person name="Campbell M.L."/>
            <person name="Chen J."/>
            <person name="Chertkov O."/>
            <person name="Cleland C."/>
            <person name="Dimitrijevic M."/>
            <person name="Doggett N.A."/>
            <person name="Fawcett J.J."/>
            <person name="Glavina T."/>
            <person name="Goodwin L.A."/>
            <person name="Hill K.K."/>
            <person name="Hitchcock P."/>
            <person name="Jackson P.J."/>
            <person name="Keim P."/>
            <person name="Kewalramani A.R."/>
            <person name="Longmire J."/>
            <person name="Lucas S."/>
            <person name="Malfatti S."/>
            <person name="McMurry K."/>
            <person name="Meincke L.J."/>
            <person name="Misra M."/>
            <person name="Moseman B.L."/>
            <person name="Mundt M."/>
            <person name="Munk A.C."/>
            <person name="Okinaka R.T."/>
            <person name="Parson-Quintana B."/>
            <person name="Reilly L.P."/>
            <person name="Richardson P."/>
            <person name="Robinson D.L."/>
            <person name="Rubin E."/>
            <person name="Saunders E."/>
            <person name="Tapia R."/>
            <person name="Tesmer J.G."/>
            <person name="Thayer N."/>
            <person name="Thompson L.S."/>
            <person name="Tice H."/>
            <person name="Ticknor L.O."/>
            <person name="Wills P.L."/>
            <person name="Brettin T.S."/>
            <person name="Gilna P."/>
        </authorList>
    </citation>
    <scope>NUCLEOTIDE SEQUENCE [LARGE SCALE GENOMIC DNA]</scope>
    <source>
        <strain>97-27</strain>
    </source>
</reference>
<gene>
    <name evidence="1" type="primary">moaC</name>
    <name type="ordered locus">BT9727_4455</name>
</gene>
<organism>
    <name type="scientific">Bacillus thuringiensis subsp. konkukian (strain 97-27)</name>
    <dbReference type="NCBI Taxonomy" id="281309"/>
    <lineage>
        <taxon>Bacteria</taxon>
        <taxon>Bacillati</taxon>
        <taxon>Bacillota</taxon>
        <taxon>Bacilli</taxon>
        <taxon>Bacillales</taxon>
        <taxon>Bacillaceae</taxon>
        <taxon>Bacillus</taxon>
        <taxon>Bacillus cereus group</taxon>
    </lineage>
</organism>
<accession>Q6HCF7</accession>
<feature type="chain" id="PRO_1000054069" description="Cyclic pyranopterin monophosphate synthase">
    <location>
        <begin position="1"/>
        <end position="161"/>
    </location>
</feature>
<feature type="active site" evidence="1">
    <location>
        <position position="130"/>
    </location>
</feature>
<feature type="binding site" evidence="1">
    <location>
        <begin position="75"/>
        <end position="77"/>
    </location>
    <ligand>
        <name>substrate</name>
    </ligand>
</feature>
<feature type="binding site" evidence="1">
    <location>
        <begin position="115"/>
        <end position="116"/>
    </location>
    <ligand>
        <name>substrate</name>
    </ligand>
</feature>
<comment type="function">
    <text evidence="1">Catalyzes the conversion of (8S)-3',8-cyclo-7,8-dihydroguanosine 5'-triphosphate to cyclic pyranopterin monophosphate (cPMP).</text>
</comment>
<comment type="catalytic activity">
    <reaction evidence="1">
        <text>(8S)-3',8-cyclo-7,8-dihydroguanosine 5'-triphosphate = cyclic pyranopterin phosphate + diphosphate</text>
        <dbReference type="Rhea" id="RHEA:49580"/>
        <dbReference type="ChEBI" id="CHEBI:33019"/>
        <dbReference type="ChEBI" id="CHEBI:59648"/>
        <dbReference type="ChEBI" id="CHEBI:131766"/>
        <dbReference type="EC" id="4.6.1.17"/>
    </reaction>
</comment>
<comment type="pathway">
    <text evidence="1">Cofactor biosynthesis; molybdopterin biosynthesis.</text>
</comment>
<comment type="subunit">
    <text evidence="1">Homohexamer; trimer of dimers.</text>
</comment>
<comment type="similarity">
    <text evidence="1">Belongs to the MoaC family.</text>
</comment>
<evidence type="ECO:0000255" key="1">
    <source>
        <dbReference type="HAMAP-Rule" id="MF_01224"/>
    </source>
</evidence>
<name>MOAC_BACHK</name>
<keyword id="KW-0456">Lyase</keyword>
<keyword id="KW-0501">Molybdenum cofactor biosynthesis</keyword>
<dbReference type="EC" id="4.6.1.17" evidence="1"/>
<dbReference type="EMBL" id="AE017355">
    <property type="protein sequence ID" value="AAT63747.1"/>
    <property type="molecule type" value="Genomic_DNA"/>
</dbReference>
<dbReference type="RefSeq" id="WP_000094151.1">
    <property type="nucleotide sequence ID" value="NC_005957.1"/>
</dbReference>
<dbReference type="RefSeq" id="YP_038769.1">
    <property type="nucleotide sequence ID" value="NC_005957.1"/>
</dbReference>
<dbReference type="SMR" id="Q6HCF7"/>
<dbReference type="KEGG" id="btk:BT9727_4455"/>
<dbReference type="PATRIC" id="fig|281309.8.peg.4744"/>
<dbReference type="HOGENOM" id="CLU_074693_1_1_9"/>
<dbReference type="UniPathway" id="UPA00344"/>
<dbReference type="Proteomes" id="UP000001301">
    <property type="component" value="Chromosome"/>
</dbReference>
<dbReference type="GO" id="GO:0061799">
    <property type="term" value="F:cyclic pyranopterin monophosphate synthase activity"/>
    <property type="evidence" value="ECO:0007669"/>
    <property type="project" value="UniProtKB-UniRule"/>
</dbReference>
<dbReference type="GO" id="GO:0006777">
    <property type="term" value="P:Mo-molybdopterin cofactor biosynthetic process"/>
    <property type="evidence" value="ECO:0007669"/>
    <property type="project" value="UniProtKB-UniRule"/>
</dbReference>
<dbReference type="CDD" id="cd01420">
    <property type="entry name" value="MoaC_PE"/>
    <property type="match status" value="1"/>
</dbReference>
<dbReference type="Gene3D" id="3.30.70.640">
    <property type="entry name" value="Molybdopterin cofactor biosynthesis C (MoaC) domain"/>
    <property type="match status" value="1"/>
</dbReference>
<dbReference type="HAMAP" id="MF_01224_B">
    <property type="entry name" value="MoaC_B"/>
    <property type="match status" value="1"/>
</dbReference>
<dbReference type="InterPro" id="IPR023045">
    <property type="entry name" value="MoaC"/>
</dbReference>
<dbReference type="InterPro" id="IPR047594">
    <property type="entry name" value="MoaC_bact/euk"/>
</dbReference>
<dbReference type="InterPro" id="IPR036522">
    <property type="entry name" value="MoaC_sf"/>
</dbReference>
<dbReference type="InterPro" id="IPR050105">
    <property type="entry name" value="MoCo_biosynth_MoaA/MoaC"/>
</dbReference>
<dbReference type="InterPro" id="IPR002820">
    <property type="entry name" value="Mopterin_CF_biosynth-C_dom"/>
</dbReference>
<dbReference type="NCBIfam" id="TIGR00581">
    <property type="entry name" value="moaC"/>
    <property type="match status" value="1"/>
</dbReference>
<dbReference type="NCBIfam" id="NF006870">
    <property type="entry name" value="PRK09364.1"/>
    <property type="match status" value="1"/>
</dbReference>
<dbReference type="PANTHER" id="PTHR22960:SF29">
    <property type="entry name" value="CYCLIC PYRANOPTERIN MONOPHOSPHATE SYNTHASE"/>
    <property type="match status" value="1"/>
</dbReference>
<dbReference type="PANTHER" id="PTHR22960">
    <property type="entry name" value="MOLYBDOPTERIN COFACTOR SYNTHESIS PROTEIN A"/>
    <property type="match status" value="1"/>
</dbReference>
<dbReference type="Pfam" id="PF01967">
    <property type="entry name" value="MoaC"/>
    <property type="match status" value="1"/>
</dbReference>
<dbReference type="SUPFAM" id="SSF55040">
    <property type="entry name" value="Molybdenum cofactor biosynthesis protein C, MoaC"/>
    <property type="match status" value="1"/>
</dbReference>